<keyword id="KW-0131">Cell cycle</keyword>
<keyword id="KW-0132">Cell division</keyword>
<keyword id="KW-0574">Periplasm</keyword>
<keyword id="KW-1185">Reference proteome</keyword>
<keyword id="KW-0732">Signal</keyword>
<reference key="1">
    <citation type="journal article" date="2001" name="Proc. Natl. Acad. Sci. U.S.A.">
        <title>Analysis of the chromosome sequence of the legume symbiont Sinorhizobium meliloti strain 1021.</title>
        <authorList>
            <person name="Capela D."/>
            <person name="Barloy-Hubler F."/>
            <person name="Gouzy J."/>
            <person name="Bothe G."/>
            <person name="Ampe F."/>
            <person name="Batut J."/>
            <person name="Boistard P."/>
            <person name="Becker A."/>
            <person name="Boutry M."/>
            <person name="Cadieu E."/>
            <person name="Dreano S."/>
            <person name="Gloux S."/>
            <person name="Godrie T."/>
            <person name="Goffeau A."/>
            <person name="Kahn D."/>
            <person name="Kiss E."/>
            <person name="Lelaure V."/>
            <person name="Masuy D."/>
            <person name="Pohl T."/>
            <person name="Portetelle D."/>
            <person name="Puehler A."/>
            <person name="Purnelle B."/>
            <person name="Ramsperger U."/>
            <person name="Renard C."/>
            <person name="Thebault P."/>
            <person name="Vandenbol M."/>
            <person name="Weidner S."/>
            <person name="Galibert F."/>
        </authorList>
    </citation>
    <scope>NUCLEOTIDE SEQUENCE [LARGE SCALE GENOMIC DNA]</scope>
    <source>
        <strain>1021</strain>
    </source>
</reference>
<reference key="2">
    <citation type="journal article" date="2001" name="Science">
        <title>The composite genome of the legume symbiont Sinorhizobium meliloti.</title>
        <authorList>
            <person name="Galibert F."/>
            <person name="Finan T.M."/>
            <person name="Long S.R."/>
            <person name="Puehler A."/>
            <person name="Abola P."/>
            <person name="Ampe F."/>
            <person name="Barloy-Hubler F."/>
            <person name="Barnett M.J."/>
            <person name="Becker A."/>
            <person name="Boistard P."/>
            <person name="Bothe G."/>
            <person name="Boutry M."/>
            <person name="Bowser L."/>
            <person name="Buhrmester J."/>
            <person name="Cadieu E."/>
            <person name="Capela D."/>
            <person name="Chain P."/>
            <person name="Cowie A."/>
            <person name="Davis R.W."/>
            <person name="Dreano S."/>
            <person name="Federspiel N.A."/>
            <person name="Fisher R.F."/>
            <person name="Gloux S."/>
            <person name="Godrie T."/>
            <person name="Goffeau A."/>
            <person name="Golding B."/>
            <person name="Gouzy J."/>
            <person name="Gurjal M."/>
            <person name="Hernandez-Lucas I."/>
            <person name="Hong A."/>
            <person name="Huizar L."/>
            <person name="Hyman R.W."/>
            <person name="Jones T."/>
            <person name="Kahn D."/>
            <person name="Kahn M.L."/>
            <person name="Kalman S."/>
            <person name="Keating D.H."/>
            <person name="Kiss E."/>
            <person name="Komp C."/>
            <person name="Lelaure V."/>
            <person name="Masuy D."/>
            <person name="Palm C."/>
            <person name="Peck M.C."/>
            <person name="Pohl T.M."/>
            <person name="Portetelle D."/>
            <person name="Purnelle B."/>
            <person name="Ramsperger U."/>
            <person name="Surzycki R."/>
            <person name="Thebault P."/>
            <person name="Vandenbol M."/>
            <person name="Vorhoelter F.J."/>
            <person name="Weidner S."/>
            <person name="Wells D.H."/>
            <person name="Wong K."/>
            <person name="Yeh K.-C."/>
            <person name="Batut J."/>
        </authorList>
    </citation>
    <scope>NUCLEOTIDE SEQUENCE [LARGE SCALE GENOMIC DNA]</scope>
    <source>
        <strain>1021</strain>
    </source>
</reference>
<organism>
    <name type="scientific">Rhizobium meliloti (strain 1021)</name>
    <name type="common">Ensifer meliloti</name>
    <name type="synonym">Sinorhizobium meliloti</name>
    <dbReference type="NCBI Taxonomy" id="266834"/>
    <lineage>
        <taxon>Bacteria</taxon>
        <taxon>Pseudomonadati</taxon>
        <taxon>Pseudomonadota</taxon>
        <taxon>Alphaproteobacteria</taxon>
        <taxon>Hyphomicrobiales</taxon>
        <taxon>Rhizobiaceae</taxon>
        <taxon>Sinorhizobium/Ensifer group</taxon>
        <taxon>Sinorhizobium</taxon>
    </lineage>
</organism>
<accession>Q926C2</accession>
<comment type="function">
    <text evidence="1">Part of the Tol-Pal system, which plays a role in outer membrane invagination during cell division and is important for maintaining outer membrane integrity.</text>
</comment>
<comment type="subunit">
    <text evidence="1">The Tol-Pal system is composed of five core proteins: the inner membrane proteins TolA, TolQ and TolR, the periplasmic protein TolB and the outer membrane protein Pal. They form a network linking the inner and outer membranes and the peptidoglycan layer.</text>
</comment>
<comment type="subcellular location">
    <subcellularLocation>
        <location evidence="1">Periplasm</location>
    </subcellularLocation>
</comment>
<comment type="similarity">
    <text evidence="1">Belongs to the TolB family.</text>
</comment>
<feature type="signal peptide" evidence="1">
    <location>
        <begin position="1"/>
        <end position="28"/>
    </location>
</feature>
<feature type="chain" id="PRO_0000034678" description="Tol-Pal system protein TolB" evidence="1">
    <location>
        <begin position="29"/>
        <end position="436"/>
    </location>
</feature>
<name>TOLB_RHIME</name>
<dbReference type="EMBL" id="AL591688">
    <property type="protein sequence ID" value="CAC47318.1"/>
    <property type="molecule type" value="Genomic_DNA"/>
</dbReference>
<dbReference type="RefSeq" id="NP_386845.1">
    <property type="nucleotide sequence ID" value="NC_003047.1"/>
</dbReference>
<dbReference type="RefSeq" id="WP_010970163.1">
    <property type="nucleotide sequence ID" value="NC_003047.1"/>
</dbReference>
<dbReference type="SMR" id="Q926C2"/>
<dbReference type="EnsemblBacteria" id="CAC47318">
    <property type="protein sequence ID" value="CAC47318"/>
    <property type="gene ID" value="SMc04461"/>
</dbReference>
<dbReference type="GeneID" id="89577154"/>
<dbReference type="KEGG" id="sme:SMc04461"/>
<dbReference type="PATRIC" id="fig|266834.11.peg.4247"/>
<dbReference type="eggNOG" id="COG0823">
    <property type="taxonomic scope" value="Bacteria"/>
</dbReference>
<dbReference type="HOGENOM" id="CLU_047123_0_0_5"/>
<dbReference type="OrthoDB" id="9802240at2"/>
<dbReference type="Proteomes" id="UP000001976">
    <property type="component" value="Chromosome"/>
</dbReference>
<dbReference type="GO" id="GO:0042597">
    <property type="term" value="C:periplasmic space"/>
    <property type="evidence" value="ECO:0007669"/>
    <property type="project" value="UniProtKB-SubCell"/>
</dbReference>
<dbReference type="GO" id="GO:0051301">
    <property type="term" value="P:cell division"/>
    <property type="evidence" value="ECO:0007669"/>
    <property type="project" value="UniProtKB-UniRule"/>
</dbReference>
<dbReference type="GO" id="GO:0017038">
    <property type="term" value="P:protein import"/>
    <property type="evidence" value="ECO:0007669"/>
    <property type="project" value="InterPro"/>
</dbReference>
<dbReference type="Gene3D" id="2.120.10.30">
    <property type="entry name" value="TolB, C-terminal domain"/>
    <property type="match status" value="1"/>
</dbReference>
<dbReference type="Gene3D" id="3.40.50.10070">
    <property type="entry name" value="TolB, N-terminal domain"/>
    <property type="match status" value="1"/>
</dbReference>
<dbReference type="HAMAP" id="MF_00671">
    <property type="entry name" value="TolB"/>
    <property type="match status" value="1"/>
</dbReference>
<dbReference type="InterPro" id="IPR011042">
    <property type="entry name" value="6-blade_b-propeller_TolB-like"/>
</dbReference>
<dbReference type="InterPro" id="IPR011659">
    <property type="entry name" value="PD40"/>
</dbReference>
<dbReference type="InterPro" id="IPR014167">
    <property type="entry name" value="Tol-Pal_TolB"/>
</dbReference>
<dbReference type="InterPro" id="IPR007195">
    <property type="entry name" value="TolB_N"/>
</dbReference>
<dbReference type="NCBIfam" id="TIGR02800">
    <property type="entry name" value="propeller_TolB"/>
    <property type="match status" value="1"/>
</dbReference>
<dbReference type="PANTHER" id="PTHR36842:SF1">
    <property type="entry name" value="PROTEIN TOLB"/>
    <property type="match status" value="1"/>
</dbReference>
<dbReference type="PANTHER" id="PTHR36842">
    <property type="entry name" value="PROTEIN TOLB HOMOLOG"/>
    <property type="match status" value="1"/>
</dbReference>
<dbReference type="Pfam" id="PF07676">
    <property type="entry name" value="PD40"/>
    <property type="match status" value="4"/>
</dbReference>
<dbReference type="Pfam" id="PF04052">
    <property type="entry name" value="TolB_N"/>
    <property type="match status" value="1"/>
</dbReference>
<dbReference type="SUPFAM" id="SSF52964">
    <property type="entry name" value="TolB, N-terminal domain"/>
    <property type="match status" value="1"/>
</dbReference>
<dbReference type="SUPFAM" id="SSF69304">
    <property type="entry name" value="Tricorn protease N-terminal domain"/>
    <property type="match status" value="1"/>
</dbReference>
<gene>
    <name evidence="1" type="primary">tolB</name>
    <name type="ordered locus">R02739</name>
    <name type="ORF">SMc04461</name>
</gene>
<protein>
    <recommendedName>
        <fullName evidence="1">Tol-Pal system protein TolB</fullName>
    </recommendedName>
</protein>
<proteinExistence type="inferred from homology"/>
<sequence length="436" mass="48236">MEMLRRNFFRLLMVLVAGCGLIASPANALVEININKGNVEPLPIAITDFLQGELAQKISGVIAADLKRSGLFAPIDKGAFIEKISNPDATPRFEDWKVINAQALVIGRVTQEGDGRLKAEFRLWDTFAGQQMLGQQFYTQPENWRRVAHIIADAIYERITGEKGYFDTRIVYVAESGPKNARKRQLAIMDQDGANSRALTNSNDIVLTPRFSPNRQEITYMSFENQQPRVYLLQLETGQREVVGNFPGMTFAPRFSPDGQRVIMSLQQEGNANIYTMDLRSRTTTRLTNTAAIDTSPSYSPDGSRIVFESDRGGKQQLYVMGADGSGQTRISFGDGSYSTPVWSPRGDLIAFTKQSGGKFSIGVMKPDGSGERILTTGFHNEGPTWAPNGRVLMFFRQNAGAGGPQLYSIDLTGYNEQLVQTQGFASDPAWSPLME</sequence>
<evidence type="ECO:0000255" key="1">
    <source>
        <dbReference type="HAMAP-Rule" id="MF_00671"/>
    </source>
</evidence>